<dbReference type="EMBL" id="AY630565">
    <property type="protein sequence ID" value="AAU04394.1"/>
    <property type="molecule type" value="mRNA"/>
</dbReference>
<dbReference type="SMR" id="Q5USN8"/>
<dbReference type="GO" id="GO:0006952">
    <property type="term" value="P:defense response"/>
    <property type="evidence" value="ECO:0007669"/>
    <property type="project" value="UniProtKB-KW"/>
</dbReference>
<dbReference type="GO" id="GO:0031640">
    <property type="term" value="P:killing of cells of another organism"/>
    <property type="evidence" value="ECO:0007669"/>
    <property type="project" value="UniProtKB-KW"/>
</dbReference>
<dbReference type="InterPro" id="IPR005535">
    <property type="entry name" value="Cyclotide"/>
</dbReference>
<dbReference type="InterPro" id="IPR012323">
    <property type="entry name" value="Cyclotide_bracelet_CS"/>
</dbReference>
<dbReference type="InterPro" id="IPR036146">
    <property type="entry name" value="Cyclotide_sf"/>
</dbReference>
<dbReference type="Pfam" id="PF03784">
    <property type="entry name" value="Cyclotide"/>
    <property type="match status" value="1"/>
</dbReference>
<dbReference type="SUPFAM" id="SSF57038">
    <property type="entry name" value="Cyclotides"/>
    <property type="match status" value="1"/>
</dbReference>
<dbReference type="PROSITE" id="PS51052">
    <property type="entry name" value="CYCLOTIDE"/>
    <property type="match status" value="1"/>
</dbReference>
<dbReference type="PROSITE" id="PS60008">
    <property type="entry name" value="CYCLOTIDE_BRACELET"/>
    <property type="match status" value="1"/>
</dbReference>
<evidence type="ECO:0000250" key="1">
    <source>
        <dbReference type="UniProtKB" id="P56871"/>
    </source>
</evidence>
<evidence type="ECO:0000255" key="2"/>
<evidence type="ECO:0000255" key="3">
    <source>
        <dbReference type="PROSITE-ProRule" id="PRU00395"/>
    </source>
</evidence>
<evidence type="ECO:0000269" key="4">
    <source>
    </source>
</evidence>
<evidence type="ECO:0000269" key="5">
    <source>
    </source>
</evidence>
<evidence type="ECO:0000303" key="6">
    <source>
    </source>
</evidence>
<evidence type="ECO:0000305" key="7"/>
<evidence type="ECO:0000312" key="8">
    <source>
        <dbReference type="EMBL" id="AAU04394.1"/>
    </source>
</evidence>
<name>CYO13_VIOOD</name>
<comment type="function">
    <text evidence="3 4 7">Probably participates in a plant defense mechanism. Has hemolytic activity.</text>
</comment>
<comment type="tissue specificity">
    <text evidence="5">Expressed in leaves, petals, petioles, roots and runners (at protein level).</text>
</comment>
<comment type="domain">
    <text evidence="1">The presence of a 'disulfide through disulfide knot' structurally defines this protein as a knottin.</text>
</comment>
<comment type="PTM">
    <text evidence="4">Cycloviolacin-O13 is a cyclic peptide.</text>
</comment>
<comment type="mass spectrometry" mass="3122.4" method="MALDI" evidence="4"/>
<comment type="similarity">
    <text evidence="3">Belongs to the cyclotide family. Bracelet subfamily.</text>
</comment>
<organism>
    <name type="scientific">Viola odorata</name>
    <name type="common">Sweet violet</name>
    <dbReference type="NCBI Taxonomy" id="97441"/>
    <lineage>
        <taxon>Eukaryota</taxon>
        <taxon>Viridiplantae</taxon>
        <taxon>Streptophyta</taxon>
        <taxon>Embryophyta</taxon>
        <taxon>Tracheophyta</taxon>
        <taxon>Spermatophyta</taxon>
        <taxon>Magnoliopsida</taxon>
        <taxon>eudicotyledons</taxon>
        <taxon>Gunneridae</taxon>
        <taxon>Pentapetalae</taxon>
        <taxon>rosids</taxon>
        <taxon>fabids</taxon>
        <taxon>Malpighiales</taxon>
        <taxon>Violaceae</taxon>
        <taxon>Viola</taxon>
        <taxon>Viola subgen. Viola</taxon>
        <taxon>Viola sect. Viola</taxon>
        <taxon>Viola subsect. Viola</taxon>
    </lineage>
</organism>
<proteinExistence type="evidence at protein level"/>
<accession>Q5USN8</accession>
<keyword id="KW-0204">Cytolysis</keyword>
<keyword id="KW-0903">Direct protein sequencing</keyword>
<keyword id="KW-1015">Disulfide bond</keyword>
<keyword id="KW-0354">Hemolysis</keyword>
<keyword id="KW-0960">Knottin</keyword>
<keyword id="KW-0611">Plant defense</keyword>
<keyword id="KW-0732">Signal</keyword>
<reference evidence="8" key="1">
    <citation type="journal article" date="2004" name="J. Biol. Chem.">
        <title>Conserved structural and sequence elements implicated in the processing of gene-encoded circular proteins.</title>
        <authorList>
            <person name="Dutton J.L."/>
            <person name="Renda R.F."/>
            <person name="Waine C."/>
            <person name="Clark R.J."/>
            <person name="Daly N.L."/>
            <person name="Jennings C.V."/>
            <person name="Anderson M.A."/>
            <person name="Craik D.J."/>
        </authorList>
    </citation>
    <scope>NUCLEOTIDE SEQUENCE [MRNA]</scope>
    <source>
        <tissue evidence="8">Leaf</tissue>
    </source>
</reference>
<reference evidence="7" key="2">
    <citation type="journal article" date="2006" name="Biochem. J.">
        <title>A novel suite of cyclotides from Viola odorata: sequence variation and the implications for structure, function and stability.</title>
        <authorList>
            <person name="Ireland D.C."/>
            <person name="Colgrave M.L."/>
            <person name="Craik D.J."/>
        </authorList>
    </citation>
    <scope>PROTEIN SEQUENCE OF 82-111</scope>
    <scope>FUNCTION</scope>
    <scope>MASS SPECTROMETRY</scope>
</reference>
<reference key="3">
    <citation type="journal article" date="2017" name="J. Nat. Prod.">
        <title>Cyclotides from the Indian Medicinal Plant Viola odorata (Banafsha): Identification and Characterization.</title>
        <authorList>
            <person name="Narayani M."/>
            <person name="Chadha A."/>
            <person name="Srivastava S."/>
        </authorList>
    </citation>
    <scope>TISSUE SPECIFICITY</scope>
    <scope>IDENTIFICATION BY MASS SPECTROMETRY</scope>
</reference>
<protein>
    <recommendedName>
        <fullName>Cycloviolacin-O13</fullName>
    </recommendedName>
    <alternativeName>
        <fullName>Cyclotide c3</fullName>
    </alternativeName>
</protein>
<feature type="signal peptide" evidence="2">
    <location>
        <begin position="1"/>
        <end position="22"/>
    </location>
</feature>
<feature type="propeptide" id="PRO_0000294940" evidence="4">
    <location>
        <begin position="23"/>
        <end position="81"/>
    </location>
</feature>
<feature type="peptide" id="PRO_0000294941" description="Cycloviolacin-O13" evidence="3 4">
    <location>
        <begin position="82"/>
        <end position="111"/>
    </location>
</feature>
<feature type="propeptide" id="PRO_0000294942" evidence="4">
    <location>
        <begin position="112"/>
        <end position="115"/>
    </location>
</feature>
<feature type="disulfide bond" evidence="1 3">
    <location>
        <begin position="85"/>
        <end position="101"/>
    </location>
</feature>
<feature type="disulfide bond" evidence="1 3">
    <location>
        <begin position="89"/>
        <end position="103"/>
    </location>
</feature>
<feature type="disulfide bond" evidence="1 3">
    <location>
        <begin position="94"/>
        <end position="108"/>
    </location>
</feature>
<feature type="cross-link" description="Cyclopeptide (Gly-Asn)" evidence="4">
    <location>
        <begin position="82"/>
        <end position="111"/>
    </location>
</feature>
<sequence length="115" mass="12439">MDAKKMFVALVLIATFALPSLATFEKDFITPETIQAILKKSAPLSNIMLEEDVINALLKSKTVISNPIIEEAFLKNSNGLNGIPCGESCVWIPCISAAIGCSCKSKVCYRNSLDN</sequence>
<gene>
    <name evidence="6" type="primary">Voc3</name>
</gene>